<sequence>DIDCKTVDSALSPCIPYLLGGGTPTTDCCKGVSAIKDMSTTTDNKRNACKCVKTAAARYPSLKDEVAQALPDKCQVKLDIPISRNTNCDAI</sequence>
<accession>C0HM61</accession>
<comment type="function">
    <text evidence="1">Plant non-specific lipid-transfer proteins transfer phospholipids as well as galactolipids across membranes (By similarity). May play a role in wax or cutin deposition in the cell walls of expanding epidermal cells and certain secretory tissues (By similarity).</text>
</comment>
<comment type="tissue specificity">
    <text evidence="3">Detected in seeds (at protein level).</text>
</comment>
<comment type="mass spectrometry"/>
<comment type="miscellaneous">
    <text evidence="3">Displays antioxidant and antiproliferative activity (PubMed:37474939). Exhibits antiproliferative activity towards the breast cancer cell lines MDA-MB-231 (IC(50)= 52.93 uM) and MCF-7 (IC(50)= 44.76 uM) (PubMed:37474939).</text>
</comment>
<comment type="similarity">
    <text evidence="5">Belongs to the plant LTP family.</text>
</comment>
<evidence type="ECO:0000250" key="1">
    <source>
        <dbReference type="UniProtKB" id="C0HLG2"/>
    </source>
</evidence>
<evidence type="ECO:0000250" key="2">
    <source>
        <dbReference type="UniProtKB" id="Q42952"/>
    </source>
</evidence>
<evidence type="ECO:0000269" key="3">
    <source>
    </source>
</evidence>
<evidence type="ECO:0000303" key="4">
    <source>
    </source>
</evidence>
<evidence type="ECO:0000305" key="5"/>
<reference evidence="5" key="1">
    <citation type="journal article" date="2023" name="BMC Complement. Med. Ther.">
        <title>The structural characterization and bioactivity assessment of nonspecific lipid transfer protein 1 (nsLTP1) from caraway (Carum carvi) seeds.</title>
        <authorList>
            <person name="Aldakhil T."/>
            <person name="Alshammari S.O."/>
            <person name="Siraj B."/>
            <person name="El-Aarag B."/>
            <person name="Zarina S."/>
            <person name="Salehi D."/>
            <person name="Ahmed A."/>
        </authorList>
    </citation>
    <scope>PROTEIN SEQUENCE</scope>
    <scope>IDENTIFICATION BY MASS SPECTROMETRY</scope>
    <scope>TISSUE SPECIFICITY</scope>
    <source>
        <tissue evidence="4">Seed</tissue>
    </source>
</reference>
<proteinExistence type="evidence at protein level"/>
<organism evidence="4">
    <name type="scientific">Carum carvi</name>
    <name type="common">Caraway</name>
    <dbReference type="NCBI Taxonomy" id="48032"/>
    <lineage>
        <taxon>Eukaryota</taxon>
        <taxon>Viridiplantae</taxon>
        <taxon>Streptophyta</taxon>
        <taxon>Embryophyta</taxon>
        <taxon>Tracheophyta</taxon>
        <taxon>Spermatophyta</taxon>
        <taxon>Magnoliopsida</taxon>
        <taxon>eudicotyledons</taxon>
        <taxon>Gunneridae</taxon>
        <taxon>Pentapetalae</taxon>
        <taxon>asterids</taxon>
        <taxon>campanulids</taxon>
        <taxon>Apiales</taxon>
        <taxon>Apiaceae</taxon>
        <taxon>Apioideae</taxon>
        <taxon>apioid superclade</taxon>
        <taxon>Careae</taxon>
        <taxon>Carum</taxon>
    </lineage>
</organism>
<feature type="chain" id="PRO_0000459113" description="Non-specific lipid-transfer protein 1">
    <location>
        <begin position="1"/>
        <end position="91"/>
    </location>
</feature>
<feature type="disulfide bond" evidence="2">
    <location>
        <begin position="4"/>
        <end position="51"/>
    </location>
</feature>
<feature type="disulfide bond" evidence="2">
    <location>
        <begin position="14"/>
        <end position="28"/>
    </location>
</feature>
<feature type="disulfide bond" evidence="2">
    <location>
        <begin position="29"/>
        <end position="74"/>
    </location>
</feature>
<feature type="disulfide bond" evidence="2">
    <location>
        <begin position="49"/>
        <end position="88"/>
    </location>
</feature>
<dbReference type="SMR" id="C0HM61"/>
<dbReference type="GO" id="GO:0008289">
    <property type="term" value="F:lipid binding"/>
    <property type="evidence" value="ECO:0007669"/>
    <property type="project" value="UniProtKB-KW"/>
</dbReference>
<dbReference type="GO" id="GO:0006869">
    <property type="term" value="P:lipid transport"/>
    <property type="evidence" value="ECO:0007669"/>
    <property type="project" value="InterPro"/>
</dbReference>
<dbReference type="CDD" id="cd01960">
    <property type="entry name" value="nsLTP1"/>
    <property type="match status" value="1"/>
</dbReference>
<dbReference type="Gene3D" id="1.10.110.10">
    <property type="entry name" value="Plant lipid-transfer and hydrophobic proteins"/>
    <property type="match status" value="1"/>
</dbReference>
<dbReference type="InterPro" id="IPR036312">
    <property type="entry name" value="Bifun_inhib/LTP/seed_sf"/>
</dbReference>
<dbReference type="InterPro" id="IPR016140">
    <property type="entry name" value="Bifunc_inhib/LTP/seed_store"/>
</dbReference>
<dbReference type="InterPro" id="IPR000528">
    <property type="entry name" value="Plant_nsLTP"/>
</dbReference>
<dbReference type="PANTHER" id="PTHR33076">
    <property type="entry name" value="NON-SPECIFIC LIPID-TRANSFER PROTEIN 2-RELATED"/>
    <property type="match status" value="1"/>
</dbReference>
<dbReference type="Pfam" id="PF00234">
    <property type="entry name" value="Tryp_alpha_amyl"/>
    <property type="match status" value="1"/>
</dbReference>
<dbReference type="PRINTS" id="PR00382">
    <property type="entry name" value="LIPIDTRNSFER"/>
</dbReference>
<dbReference type="SMART" id="SM00499">
    <property type="entry name" value="AAI"/>
    <property type="match status" value="1"/>
</dbReference>
<dbReference type="SUPFAM" id="SSF47699">
    <property type="entry name" value="Bifunctional inhibitor/lipid-transfer protein/seed storage 2S albumin"/>
    <property type="match status" value="1"/>
</dbReference>
<dbReference type="PROSITE" id="PS00597">
    <property type="entry name" value="PLANT_LTP"/>
    <property type="match status" value="1"/>
</dbReference>
<name>NLTP1_CARCB</name>
<protein>
    <recommendedName>
        <fullName evidence="4">Non-specific lipid-transfer protein 1</fullName>
        <shortName evidence="5">LTP1</shortName>
        <shortName evidence="4">nsLTP1</shortName>
    </recommendedName>
</protein>
<keyword id="KW-0903">Direct protein sequencing</keyword>
<keyword id="KW-1015">Disulfide bond</keyword>
<keyword id="KW-0446">Lipid-binding</keyword>
<keyword id="KW-0813">Transport</keyword>